<name>FABH_ALKEH</name>
<dbReference type="EC" id="2.3.1.180" evidence="1"/>
<dbReference type="EMBL" id="CP000453">
    <property type="protein sequence ID" value="ABI56772.1"/>
    <property type="molecule type" value="Genomic_DNA"/>
</dbReference>
<dbReference type="RefSeq" id="WP_011629167.1">
    <property type="nucleotide sequence ID" value="NC_008340.1"/>
</dbReference>
<dbReference type="SMR" id="Q0A8R5"/>
<dbReference type="KEGG" id="aeh:Mlg_1423"/>
<dbReference type="eggNOG" id="COG0332">
    <property type="taxonomic scope" value="Bacteria"/>
</dbReference>
<dbReference type="HOGENOM" id="CLU_039592_4_1_6"/>
<dbReference type="OrthoDB" id="9815506at2"/>
<dbReference type="UniPathway" id="UPA00094"/>
<dbReference type="Proteomes" id="UP000001962">
    <property type="component" value="Chromosome"/>
</dbReference>
<dbReference type="GO" id="GO:0005737">
    <property type="term" value="C:cytoplasm"/>
    <property type="evidence" value="ECO:0007669"/>
    <property type="project" value="UniProtKB-SubCell"/>
</dbReference>
<dbReference type="GO" id="GO:0004315">
    <property type="term" value="F:3-oxoacyl-[acyl-carrier-protein] synthase activity"/>
    <property type="evidence" value="ECO:0007669"/>
    <property type="project" value="InterPro"/>
</dbReference>
<dbReference type="GO" id="GO:0033818">
    <property type="term" value="F:beta-ketoacyl-acyl-carrier-protein synthase III activity"/>
    <property type="evidence" value="ECO:0007669"/>
    <property type="project" value="UniProtKB-UniRule"/>
</dbReference>
<dbReference type="GO" id="GO:0006633">
    <property type="term" value="P:fatty acid biosynthetic process"/>
    <property type="evidence" value="ECO:0007669"/>
    <property type="project" value="UniProtKB-UniRule"/>
</dbReference>
<dbReference type="CDD" id="cd00830">
    <property type="entry name" value="KAS_III"/>
    <property type="match status" value="1"/>
</dbReference>
<dbReference type="FunFam" id="3.40.47.10:FF:000004">
    <property type="entry name" value="3-oxoacyl-[acyl-carrier-protein] synthase 3"/>
    <property type="match status" value="1"/>
</dbReference>
<dbReference type="Gene3D" id="3.40.47.10">
    <property type="match status" value="1"/>
</dbReference>
<dbReference type="HAMAP" id="MF_01815">
    <property type="entry name" value="FabH"/>
    <property type="match status" value="1"/>
</dbReference>
<dbReference type="InterPro" id="IPR013747">
    <property type="entry name" value="ACP_syn_III_C"/>
</dbReference>
<dbReference type="InterPro" id="IPR013751">
    <property type="entry name" value="ACP_syn_III_N"/>
</dbReference>
<dbReference type="InterPro" id="IPR004655">
    <property type="entry name" value="FabH"/>
</dbReference>
<dbReference type="InterPro" id="IPR016039">
    <property type="entry name" value="Thiolase-like"/>
</dbReference>
<dbReference type="NCBIfam" id="TIGR00747">
    <property type="entry name" value="fabH"/>
    <property type="match status" value="1"/>
</dbReference>
<dbReference type="NCBIfam" id="NF006829">
    <property type="entry name" value="PRK09352.1"/>
    <property type="match status" value="1"/>
</dbReference>
<dbReference type="PANTHER" id="PTHR43091">
    <property type="entry name" value="3-OXOACYL-[ACYL-CARRIER-PROTEIN] SYNTHASE"/>
    <property type="match status" value="1"/>
</dbReference>
<dbReference type="PANTHER" id="PTHR43091:SF1">
    <property type="entry name" value="BETA-KETOACYL-[ACYL-CARRIER-PROTEIN] SYNTHASE III, CHLOROPLASTIC"/>
    <property type="match status" value="1"/>
</dbReference>
<dbReference type="Pfam" id="PF08545">
    <property type="entry name" value="ACP_syn_III"/>
    <property type="match status" value="1"/>
</dbReference>
<dbReference type="Pfam" id="PF08541">
    <property type="entry name" value="ACP_syn_III_C"/>
    <property type="match status" value="1"/>
</dbReference>
<dbReference type="SUPFAM" id="SSF53901">
    <property type="entry name" value="Thiolase-like"/>
    <property type="match status" value="1"/>
</dbReference>
<sequence length="323" mass="35351">MSYARIIGTGSYLPDEVITNHDLERLIDTSDEWIRERTGITERRRVAPDQTCGDLAEEAARRALEAADVSLSSIDLVIVGTCTPDRVFPSTACLLQERLGMRHGSLAFDLSAACSGFVYGLGVADQFFRTGAVRRALVIGAETMTRILDWNDRATCVLFGDGAGAVVLDRSEEPGILSTHLHSDGRYQDLLGVPWGPGQGYEKRDALGPYITMQGNEVFKVAVRTLSRIVDESLAANGLEKRDIDWLVPHQANIRIIQATARKLEMPMERVVVTVDKQGNTSAASIPMALDTAIRDGRIKRGDLLLLEAFGGGFTWGSALIRY</sequence>
<organism>
    <name type="scientific">Alkalilimnicola ehrlichii (strain ATCC BAA-1101 / DSM 17681 / MLHE-1)</name>
    <dbReference type="NCBI Taxonomy" id="187272"/>
    <lineage>
        <taxon>Bacteria</taxon>
        <taxon>Pseudomonadati</taxon>
        <taxon>Pseudomonadota</taxon>
        <taxon>Gammaproteobacteria</taxon>
        <taxon>Chromatiales</taxon>
        <taxon>Ectothiorhodospiraceae</taxon>
        <taxon>Alkalilimnicola</taxon>
    </lineage>
</organism>
<protein>
    <recommendedName>
        <fullName evidence="1">Beta-ketoacyl-[acyl-carrier-protein] synthase III</fullName>
        <shortName evidence="1">Beta-ketoacyl-ACP synthase III</shortName>
        <shortName evidence="1">KAS III</shortName>
        <ecNumber evidence="1">2.3.1.180</ecNumber>
    </recommendedName>
    <alternativeName>
        <fullName evidence="1">3-oxoacyl-[acyl-carrier-protein] synthase 3</fullName>
    </alternativeName>
    <alternativeName>
        <fullName evidence="1">3-oxoacyl-[acyl-carrier-protein] synthase III</fullName>
    </alternativeName>
</protein>
<reference key="1">
    <citation type="submission" date="2006-08" db="EMBL/GenBank/DDBJ databases">
        <title>Complete sequence of Alkalilimnicola ehrilichei MLHE-1.</title>
        <authorList>
            <person name="Copeland A."/>
            <person name="Lucas S."/>
            <person name="Lapidus A."/>
            <person name="Barry K."/>
            <person name="Detter J.C."/>
            <person name="Glavina del Rio T."/>
            <person name="Hammon N."/>
            <person name="Israni S."/>
            <person name="Dalin E."/>
            <person name="Tice H."/>
            <person name="Pitluck S."/>
            <person name="Sims D."/>
            <person name="Brettin T."/>
            <person name="Bruce D."/>
            <person name="Han C."/>
            <person name="Tapia R."/>
            <person name="Gilna P."/>
            <person name="Schmutz J."/>
            <person name="Larimer F."/>
            <person name="Land M."/>
            <person name="Hauser L."/>
            <person name="Kyrpides N."/>
            <person name="Mikhailova N."/>
            <person name="Oremland R.S."/>
            <person name="Hoeft S.E."/>
            <person name="Switzer-Blum J."/>
            <person name="Kulp T."/>
            <person name="King G."/>
            <person name="Tabita R."/>
            <person name="Witte B."/>
            <person name="Santini J.M."/>
            <person name="Basu P."/>
            <person name="Hollibaugh J.T."/>
            <person name="Xie G."/>
            <person name="Stolz J.F."/>
            <person name="Richardson P."/>
        </authorList>
    </citation>
    <scope>NUCLEOTIDE SEQUENCE [LARGE SCALE GENOMIC DNA]</scope>
    <source>
        <strain>ATCC BAA-1101 / DSM 17681 / MLHE-1</strain>
    </source>
</reference>
<keyword id="KW-0012">Acyltransferase</keyword>
<keyword id="KW-0963">Cytoplasm</keyword>
<keyword id="KW-0275">Fatty acid biosynthesis</keyword>
<keyword id="KW-0276">Fatty acid metabolism</keyword>
<keyword id="KW-0444">Lipid biosynthesis</keyword>
<keyword id="KW-0443">Lipid metabolism</keyword>
<keyword id="KW-0511">Multifunctional enzyme</keyword>
<keyword id="KW-1185">Reference proteome</keyword>
<keyword id="KW-0808">Transferase</keyword>
<comment type="function">
    <text evidence="1">Catalyzes the condensation reaction of fatty acid synthesis by the addition to an acyl acceptor of two carbons from malonyl-ACP. Catalyzes the first condensation reaction which initiates fatty acid synthesis and may therefore play a role in governing the total rate of fatty acid production. Possesses both acetoacetyl-ACP synthase and acetyl transacylase activities. Its substrate specificity determines the biosynthesis of branched-chain and/or straight-chain of fatty acids.</text>
</comment>
<comment type="catalytic activity">
    <reaction evidence="1">
        <text>malonyl-[ACP] + acetyl-CoA + H(+) = 3-oxobutanoyl-[ACP] + CO2 + CoA</text>
        <dbReference type="Rhea" id="RHEA:12080"/>
        <dbReference type="Rhea" id="RHEA-COMP:9623"/>
        <dbReference type="Rhea" id="RHEA-COMP:9625"/>
        <dbReference type="ChEBI" id="CHEBI:15378"/>
        <dbReference type="ChEBI" id="CHEBI:16526"/>
        <dbReference type="ChEBI" id="CHEBI:57287"/>
        <dbReference type="ChEBI" id="CHEBI:57288"/>
        <dbReference type="ChEBI" id="CHEBI:78449"/>
        <dbReference type="ChEBI" id="CHEBI:78450"/>
        <dbReference type="EC" id="2.3.1.180"/>
    </reaction>
</comment>
<comment type="pathway">
    <text evidence="1">Lipid metabolism; fatty acid biosynthesis.</text>
</comment>
<comment type="subunit">
    <text evidence="1">Homodimer.</text>
</comment>
<comment type="subcellular location">
    <subcellularLocation>
        <location evidence="1">Cytoplasm</location>
    </subcellularLocation>
</comment>
<comment type="domain">
    <text evidence="1">The last Arg residue of the ACP-binding site is essential for the weak association between ACP/AcpP and FabH.</text>
</comment>
<comment type="similarity">
    <text evidence="1">Belongs to the thiolase-like superfamily. FabH family.</text>
</comment>
<proteinExistence type="inferred from homology"/>
<feature type="chain" id="PRO_1000056321" description="Beta-ketoacyl-[acyl-carrier-protein] synthase III">
    <location>
        <begin position="1"/>
        <end position="323"/>
    </location>
</feature>
<feature type="region of interest" description="ACP-binding" evidence="1">
    <location>
        <begin position="251"/>
        <end position="255"/>
    </location>
</feature>
<feature type="active site" evidence="1">
    <location>
        <position position="114"/>
    </location>
</feature>
<feature type="active site" evidence="1">
    <location>
        <position position="250"/>
    </location>
</feature>
<feature type="active site" evidence="1">
    <location>
        <position position="280"/>
    </location>
</feature>
<evidence type="ECO:0000255" key="1">
    <source>
        <dbReference type="HAMAP-Rule" id="MF_01815"/>
    </source>
</evidence>
<accession>Q0A8R5</accession>
<gene>
    <name evidence="1" type="primary">fabH</name>
    <name type="ordered locus">Mlg_1423</name>
</gene>